<sequence length="173" mass="19736">MILSGKEILKNIGSNIIIEPFDEKKINPNSYNLSLHNELLVYENDILDMKTPNPTKVIKIPEDGLLLEPGKLYLGRTNEFTSTSKYVPMLEGRSSTGRLGLFIHVTAGFGDIGFSGYWTLEIFCVQPIKVYPNVEICQIYYHDIHGEYDLYSSGKYQNNKGIQPSLMYKDFEK</sequence>
<gene>
    <name evidence="1" type="primary">dcd</name>
    <name type="ordered locus">Cbei_4595</name>
</gene>
<name>DCDB_CLOB8</name>
<proteinExistence type="inferred from homology"/>
<protein>
    <recommendedName>
        <fullName evidence="1">dCTP deaminase, dUMP-forming</fullName>
        <ecNumber evidence="1">3.5.4.30</ecNumber>
    </recommendedName>
    <alternativeName>
        <fullName evidence="1">Bifunctional dCTP deaminase:dUTPase</fullName>
    </alternativeName>
    <alternativeName>
        <fullName evidence="1">DCD-DUT</fullName>
    </alternativeName>
</protein>
<accession>A6M273</accession>
<feature type="chain" id="PRO_1000189823" description="dCTP deaminase, dUMP-forming">
    <location>
        <begin position="1"/>
        <end position="173"/>
    </location>
</feature>
<feature type="active site" description="Proton donor/acceptor" evidence="1">
    <location>
        <position position="121"/>
    </location>
</feature>
<feature type="binding site" evidence="1">
    <location>
        <begin position="93"/>
        <end position="98"/>
    </location>
    <ligand>
        <name>dCTP</name>
        <dbReference type="ChEBI" id="CHEBI:61481"/>
    </ligand>
</feature>
<feature type="binding site" evidence="1">
    <location>
        <position position="111"/>
    </location>
    <ligand>
        <name>dCTP</name>
        <dbReference type="ChEBI" id="CHEBI:61481"/>
    </ligand>
</feature>
<feature type="binding site" evidence="1">
    <location>
        <begin position="119"/>
        <end position="121"/>
    </location>
    <ligand>
        <name>dCTP</name>
        <dbReference type="ChEBI" id="CHEBI:61481"/>
    </ligand>
</feature>
<feature type="binding site" evidence="1">
    <location>
        <position position="138"/>
    </location>
    <ligand>
        <name>dCTP</name>
        <dbReference type="ChEBI" id="CHEBI:61481"/>
    </ligand>
</feature>
<feature type="binding site" evidence="1">
    <location>
        <position position="151"/>
    </location>
    <ligand>
        <name>dCTP</name>
        <dbReference type="ChEBI" id="CHEBI:61481"/>
    </ligand>
</feature>
<feature type="site" description="Important for bifunctional activity" evidence="1">
    <location>
        <begin position="108"/>
        <end position="109"/>
    </location>
</feature>
<dbReference type="EC" id="3.5.4.30" evidence="1"/>
<dbReference type="EMBL" id="CP000721">
    <property type="protein sequence ID" value="ABR36703.1"/>
    <property type="molecule type" value="Genomic_DNA"/>
</dbReference>
<dbReference type="RefSeq" id="WP_012060750.1">
    <property type="nucleotide sequence ID" value="NC_009617.1"/>
</dbReference>
<dbReference type="SMR" id="A6M273"/>
<dbReference type="KEGG" id="cbe:Cbei_4595"/>
<dbReference type="eggNOG" id="COG0717">
    <property type="taxonomic scope" value="Bacteria"/>
</dbReference>
<dbReference type="HOGENOM" id="CLU_087476_0_1_9"/>
<dbReference type="UniPathway" id="UPA00610">
    <property type="reaction ID" value="UER00667"/>
</dbReference>
<dbReference type="Proteomes" id="UP000000565">
    <property type="component" value="Chromosome"/>
</dbReference>
<dbReference type="GO" id="GO:0033973">
    <property type="term" value="F:dCTP deaminase (dUMP-forming) activity"/>
    <property type="evidence" value="ECO:0007669"/>
    <property type="project" value="UniProtKB-UniRule"/>
</dbReference>
<dbReference type="GO" id="GO:0008829">
    <property type="term" value="F:dCTP deaminase activity"/>
    <property type="evidence" value="ECO:0007669"/>
    <property type="project" value="InterPro"/>
</dbReference>
<dbReference type="GO" id="GO:0000166">
    <property type="term" value="F:nucleotide binding"/>
    <property type="evidence" value="ECO:0007669"/>
    <property type="project" value="UniProtKB-KW"/>
</dbReference>
<dbReference type="GO" id="GO:0006226">
    <property type="term" value="P:dUMP biosynthetic process"/>
    <property type="evidence" value="ECO:0007669"/>
    <property type="project" value="UniProtKB-UniRule"/>
</dbReference>
<dbReference type="GO" id="GO:0006229">
    <property type="term" value="P:dUTP biosynthetic process"/>
    <property type="evidence" value="ECO:0007669"/>
    <property type="project" value="InterPro"/>
</dbReference>
<dbReference type="GO" id="GO:0015949">
    <property type="term" value="P:nucleobase-containing small molecule interconversion"/>
    <property type="evidence" value="ECO:0007669"/>
    <property type="project" value="TreeGrafter"/>
</dbReference>
<dbReference type="CDD" id="cd07557">
    <property type="entry name" value="trimeric_dUTPase"/>
    <property type="match status" value="1"/>
</dbReference>
<dbReference type="Gene3D" id="2.70.40.10">
    <property type="match status" value="1"/>
</dbReference>
<dbReference type="HAMAP" id="MF_00146">
    <property type="entry name" value="dCTP_deaminase"/>
    <property type="match status" value="1"/>
</dbReference>
<dbReference type="InterPro" id="IPR011962">
    <property type="entry name" value="dCTP_deaminase"/>
</dbReference>
<dbReference type="InterPro" id="IPR036157">
    <property type="entry name" value="dUTPase-like_sf"/>
</dbReference>
<dbReference type="InterPro" id="IPR033704">
    <property type="entry name" value="dUTPase_trimeric"/>
</dbReference>
<dbReference type="NCBIfam" id="TIGR02274">
    <property type="entry name" value="dCTP_deam"/>
    <property type="match status" value="1"/>
</dbReference>
<dbReference type="PANTHER" id="PTHR42680">
    <property type="entry name" value="DCTP DEAMINASE"/>
    <property type="match status" value="1"/>
</dbReference>
<dbReference type="PANTHER" id="PTHR42680:SF3">
    <property type="entry name" value="DCTP DEAMINASE"/>
    <property type="match status" value="1"/>
</dbReference>
<dbReference type="Pfam" id="PF22769">
    <property type="entry name" value="DCD"/>
    <property type="match status" value="1"/>
</dbReference>
<dbReference type="SUPFAM" id="SSF51283">
    <property type="entry name" value="dUTPase-like"/>
    <property type="match status" value="1"/>
</dbReference>
<keyword id="KW-0378">Hydrolase</keyword>
<keyword id="KW-0546">Nucleotide metabolism</keyword>
<keyword id="KW-0547">Nucleotide-binding</keyword>
<evidence type="ECO:0000255" key="1">
    <source>
        <dbReference type="HAMAP-Rule" id="MF_00146"/>
    </source>
</evidence>
<comment type="function">
    <text evidence="1">Bifunctional enzyme that catalyzes both the deamination of dCTP to dUTP and the hydrolysis of dUTP to dUMP without releasing the toxic dUTP intermediate.</text>
</comment>
<comment type="catalytic activity">
    <reaction evidence="1">
        <text>dCTP + 2 H2O = dUMP + NH4(+) + diphosphate</text>
        <dbReference type="Rhea" id="RHEA:19205"/>
        <dbReference type="ChEBI" id="CHEBI:15377"/>
        <dbReference type="ChEBI" id="CHEBI:28938"/>
        <dbReference type="ChEBI" id="CHEBI:33019"/>
        <dbReference type="ChEBI" id="CHEBI:61481"/>
        <dbReference type="ChEBI" id="CHEBI:246422"/>
        <dbReference type="EC" id="3.5.4.30"/>
    </reaction>
</comment>
<comment type="pathway">
    <text evidence="1">Pyrimidine metabolism; dUMP biosynthesis; dUMP from dCTP: step 1/1.</text>
</comment>
<comment type="subunit">
    <text evidence="1">Homotrimer.</text>
</comment>
<comment type="similarity">
    <text evidence="1">Belongs to the dCTP deaminase family.</text>
</comment>
<reference key="1">
    <citation type="submission" date="2007-06" db="EMBL/GenBank/DDBJ databases">
        <title>Complete sequence of Clostridium beijerinckii NCIMB 8052.</title>
        <authorList>
            <consortium name="US DOE Joint Genome Institute"/>
            <person name="Copeland A."/>
            <person name="Lucas S."/>
            <person name="Lapidus A."/>
            <person name="Barry K."/>
            <person name="Detter J.C."/>
            <person name="Glavina del Rio T."/>
            <person name="Hammon N."/>
            <person name="Israni S."/>
            <person name="Dalin E."/>
            <person name="Tice H."/>
            <person name="Pitluck S."/>
            <person name="Sims D."/>
            <person name="Brettin T."/>
            <person name="Bruce D."/>
            <person name="Tapia R."/>
            <person name="Brainard J."/>
            <person name="Schmutz J."/>
            <person name="Larimer F."/>
            <person name="Land M."/>
            <person name="Hauser L."/>
            <person name="Kyrpides N."/>
            <person name="Mikhailova N."/>
            <person name="Bennet G."/>
            <person name="Cann I."/>
            <person name="Chen J.-S."/>
            <person name="Contreras A.L."/>
            <person name="Jones D."/>
            <person name="Kashket E."/>
            <person name="Mitchell W."/>
            <person name="Stoddard S."/>
            <person name="Schwarz W."/>
            <person name="Qureshi N."/>
            <person name="Young M."/>
            <person name="Shi Z."/>
            <person name="Ezeji T."/>
            <person name="White B."/>
            <person name="Blaschek H."/>
            <person name="Richardson P."/>
        </authorList>
    </citation>
    <scope>NUCLEOTIDE SEQUENCE [LARGE SCALE GENOMIC DNA]</scope>
    <source>
        <strain>ATCC 51743 / NCIMB 8052</strain>
    </source>
</reference>
<organism>
    <name type="scientific">Clostridium beijerinckii (strain ATCC 51743 / NCIMB 8052)</name>
    <name type="common">Clostridium acetobutylicum</name>
    <dbReference type="NCBI Taxonomy" id="290402"/>
    <lineage>
        <taxon>Bacteria</taxon>
        <taxon>Bacillati</taxon>
        <taxon>Bacillota</taxon>
        <taxon>Clostridia</taxon>
        <taxon>Eubacteriales</taxon>
        <taxon>Clostridiaceae</taxon>
        <taxon>Clostridium</taxon>
    </lineage>
</organism>